<proteinExistence type="inferred from homology"/>
<name>LGT_CAMHC</name>
<organism>
    <name type="scientific">Campylobacter hominis (strain ATCC BAA-381 / DSM 21671 / CCUG 45161 / LMG 19568 / NCTC 13146 / CH001A)</name>
    <dbReference type="NCBI Taxonomy" id="360107"/>
    <lineage>
        <taxon>Bacteria</taxon>
        <taxon>Pseudomonadati</taxon>
        <taxon>Campylobacterota</taxon>
        <taxon>Epsilonproteobacteria</taxon>
        <taxon>Campylobacterales</taxon>
        <taxon>Campylobacteraceae</taxon>
        <taxon>Campylobacter</taxon>
    </lineage>
</organism>
<comment type="function">
    <text evidence="1">Catalyzes the transfer of the diacylglyceryl group from phosphatidylglycerol to the sulfhydryl group of the N-terminal cysteine of a prolipoprotein, the first step in the formation of mature lipoproteins.</text>
</comment>
<comment type="catalytic activity">
    <reaction evidence="1">
        <text>L-cysteinyl-[prolipoprotein] + a 1,2-diacyl-sn-glycero-3-phospho-(1'-sn-glycerol) = an S-1,2-diacyl-sn-glyceryl-L-cysteinyl-[prolipoprotein] + sn-glycerol 1-phosphate + H(+)</text>
        <dbReference type="Rhea" id="RHEA:56712"/>
        <dbReference type="Rhea" id="RHEA-COMP:14679"/>
        <dbReference type="Rhea" id="RHEA-COMP:14680"/>
        <dbReference type="ChEBI" id="CHEBI:15378"/>
        <dbReference type="ChEBI" id="CHEBI:29950"/>
        <dbReference type="ChEBI" id="CHEBI:57685"/>
        <dbReference type="ChEBI" id="CHEBI:64716"/>
        <dbReference type="ChEBI" id="CHEBI:140658"/>
        <dbReference type="EC" id="2.5.1.145"/>
    </reaction>
</comment>
<comment type="pathway">
    <text evidence="1">Protein modification; lipoprotein biosynthesis (diacylglyceryl transfer).</text>
</comment>
<comment type="subcellular location">
    <subcellularLocation>
        <location evidence="1">Cell inner membrane</location>
        <topology evidence="1">Multi-pass membrane protein</topology>
    </subcellularLocation>
</comment>
<comment type="similarity">
    <text evidence="1">Belongs to the Lgt family.</text>
</comment>
<dbReference type="EC" id="2.5.1.145" evidence="1"/>
<dbReference type="EMBL" id="CP000776">
    <property type="protein sequence ID" value="ABS52156.1"/>
    <property type="molecule type" value="Genomic_DNA"/>
</dbReference>
<dbReference type="RefSeq" id="WP_012108710.1">
    <property type="nucleotide sequence ID" value="NC_009714.1"/>
</dbReference>
<dbReference type="SMR" id="A7I1M8"/>
<dbReference type="STRING" id="360107.CHAB381_0855"/>
<dbReference type="KEGG" id="cha:CHAB381_0855"/>
<dbReference type="eggNOG" id="COG0682">
    <property type="taxonomic scope" value="Bacteria"/>
</dbReference>
<dbReference type="HOGENOM" id="CLU_013386_1_0_7"/>
<dbReference type="OrthoDB" id="871140at2"/>
<dbReference type="UniPathway" id="UPA00664"/>
<dbReference type="Proteomes" id="UP000002407">
    <property type="component" value="Chromosome"/>
</dbReference>
<dbReference type="GO" id="GO:0005886">
    <property type="term" value="C:plasma membrane"/>
    <property type="evidence" value="ECO:0007669"/>
    <property type="project" value="UniProtKB-SubCell"/>
</dbReference>
<dbReference type="GO" id="GO:0008961">
    <property type="term" value="F:phosphatidylglycerol-prolipoprotein diacylglyceryl transferase activity"/>
    <property type="evidence" value="ECO:0007669"/>
    <property type="project" value="UniProtKB-UniRule"/>
</dbReference>
<dbReference type="GO" id="GO:0042158">
    <property type="term" value="P:lipoprotein biosynthetic process"/>
    <property type="evidence" value="ECO:0007669"/>
    <property type="project" value="UniProtKB-UniRule"/>
</dbReference>
<dbReference type="HAMAP" id="MF_01147">
    <property type="entry name" value="Lgt"/>
    <property type="match status" value="1"/>
</dbReference>
<dbReference type="InterPro" id="IPR001640">
    <property type="entry name" value="Lgt"/>
</dbReference>
<dbReference type="NCBIfam" id="TIGR00544">
    <property type="entry name" value="lgt"/>
    <property type="match status" value="1"/>
</dbReference>
<dbReference type="PANTHER" id="PTHR30589:SF0">
    <property type="entry name" value="PHOSPHATIDYLGLYCEROL--PROLIPOPROTEIN DIACYLGLYCERYL TRANSFERASE"/>
    <property type="match status" value="1"/>
</dbReference>
<dbReference type="PANTHER" id="PTHR30589">
    <property type="entry name" value="PROLIPOPROTEIN DIACYLGLYCERYL TRANSFERASE"/>
    <property type="match status" value="1"/>
</dbReference>
<dbReference type="Pfam" id="PF01790">
    <property type="entry name" value="LGT"/>
    <property type="match status" value="1"/>
</dbReference>
<dbReference type="PROSITE" id="PS01311">
    <property type="entry name" value="LGT"/>
    <property type="match status" value="1"/>
</dbReference>
<sequence length="279" mass="32585">MTFWNEIYAHFDPVAFSIFGLKVHWYGLMYVLALLVALYMAKFFVKKDRLKFSNQVLENYFIWVEIGVILGARFGYILIYSNAQIFYLTHPWEIFNPFYNGKFVGISGMSYHGAVIGFIIATILFCRKKRQNLWSLLDLCALSIPLGYFFGRIGNFLNQELFGRITDVSWGILVNGELRHPSQLYEACLEGITIFLILYFYRKYKKFDGELICVYVILYAIFRFLTEFLREADVQIGYFSFGLSLGQILSVFMLILGFSAYIKLLKNSQTEQKFNQNKS</sequence>
<feature type="chain" id="PRO_1000053410" description="Phosphatidylglycerol--prolipoprotein diacylglyceryl transferase">
    <location>
        <begin position="1"/>
        <end position="279"/>
    </location>
</feature>
<feature type="transmembrane region" description="Helical" evidence="1">
    <location>
        <begin position="25"/>
        <end position="45"/>
    </location>
</feature>
<feature type="transmembrane region" description="Helical" evidence="1">
    <location>
        <begin position="60"/>
        <end position="80"/>
    </location>
</feature>
<feature type="transmembrane region" description="Helical" evidence="1">
    <location>
        <begin position="103"/>
        <end position="123"/>
    </location>
</feature>
<feature type="transmembrane region" description="Helical" evidence="1">
    <location>
        <begin position="133"/>
        <end position="153"/>
    </location>
</feature>
<feature type="transmembrane region" description="Helical" evidence="1">
    <location>
        <begin position="181"/>
        <end position="201"/>
    </location>
</feature>
<feature type="transmembrane region" description="Helical" evidence="1">
    <location>
        <begin position="209"/>
        <end position="229"/>
    </location>
</feature>
<feature type="transmembrane region" description="Helical" evidence="1">
    <location>
        <begin position="236"/>
        <end position="256"/>
    </location>
</feature>
<feature type="binding site" evidence="1">
    <location>
        <position position="152"/>
    </location>
    <ligand>
        <name>a 1,2-diacyl-sn-glycero-3-phospho-(1'-sn-glycerol)</name>
        <dbReference type="ChEBI" id="CHEBI:64716"/>
    </ligand>
</feature>
<accession>A7I1M8</accession>
<keyword id="KW-0997">Cell inner membrane</keyword>
<keyword id="KW-1003">Cell membrane</keyword>
<keyword id="KW-0472">Membrane</keyword>
<keyword id="KW-1185">Reference proteome</keyword>
<keyword id="KW-0808">Transferase</keyword>
<keyword id="KW-0812">Transmembrane</keyword>
<keyword id="KW-1133">Transmembrane helix</keyword>
<evidence type="ECO:0000255" key="1">
    <source>
        <dbReference type="HAMAP-Rule" id="MF_01147"/>
    </source>
</evidence>
<gene>
    <name evidence="1" type="primary">lgt</name>
    <name type="ordered locus">CHAB381_0855</name>
</gene>
<protein>
    <recommendedName>
        <fullName evidence="1">Phosphatidylglycerol--prolipoprotein diacylglyceryl transferase</fullName>
        <ecNumber evidence="1">2.5.1.145</ecNumber>
    </recommendedName>
</protein>
<reference key="1">
    <citation type="submission" date="2007-07" db="EMBL/GenBank/DDBJ databases">
        <title>Complete genome sequence of Campylobacter hominis ATCC BAA-381, a commensal isolated from the human gastrointestinal tract.</title>
        <authorList>
            <person name="Fouts D.E."/>
            <person name="Mongodin E.F."/>
            <person name="Puiu D."/>
            <person name="Sebastian Y."/>
            <person name="Miller W.G."/>
            <person name="Mandrell R.E."/>
            <person name="Nelson K.E."/>
        </authorList>
    </citation>
    <scope>NUCLEOTIDE SEQUENCE [LARGE SCALE GENOMIC DNA]</scope>
    <source>
        <strain>ATCC BAA-381 / DSM 21671 / CCUG 45161 / LMG 19568 / NCTC 13146 / CH001A</strain>
    </source>
</reference>